<protein>
    <recommendedName>
        <fullName evidence="2">Chaperone protein DnaK</fullName>
    </recommendedName>
    <alternativeName>
        <fullName evidence="2">HSP70</fullName>
    </alternativeName>
    <alternativeName>
        <fullName evidence="2">Heat shock 70 kDa protein</fullName>
    </alternativeName>
    <alternativeName>
        <fullName evidence="2">Heat shock protein 70</fullName>
    </alternativeName>
</protein>
<dbReference type="EMBL" id="AE017262">
    <property type="protein sequence ID" value="AAT04267.1"/>
    <property type="molecule type" value="Genomic_DNA"/>
</dbReference>
<dbReference type="RefSeq" id="WP_003726023.1">
    <property type="nucleotide sequence ID" value="NC_002973.6"/>
</dbReference>
<dbReference type="SMR" id="Q71ZJ7"/>
<dbReference type="KEGG" id="lmf:LMOf2365_1492"/>
<dbReference type="HOGENOM" id="CLU_005965_2_4_9"/>
<dbReference type="GO" id="GO:0005524">
    <property type="term" value="F:ATP binding"/>
    <property type="evidence" value="ECO:0007669"/>
    <property type="project" value="UniProtKB-UniRule"/>
</dbReference>
<dbReference type="GO" id="GO:0140662">
    <property type="term" value="F:ATP-dependent protein folding chaperone"/>
    <property type="evidence" value="ECO:0007669"/>
    <property type="project" value="InterPro"/>
</dbReference>
<dbReference type="GO" id="GO:0051082">
    <property type="term" value="F:unfolded protein binding"/>
    <property type="evidence" value="ECO:0007669"/>
    <property type="project" value="InterPro"/>
</dbReference>
<dbReference type="CDD" id="cd10234">
    <property type="entry name" value="ASKHA_NBD_HSP70_DnaK-like"/>
    <property type="match status" value="1"/>
</dbReference>
<dbReference type="FunFam" id="2.60.34.10:FF:000014">
    <property type="entry name" value="Chaperone protein DnaK HSP70"/>
    <property type="match status" value="1"/>
</dbReference>
<dbReference type="FunFam" id="1.20.1270.10:FF:000001">
    <property type="entry name" value="Molecular chaperone DnaK"/>
    <property type="match status" value="1"/>
</dbReference>
<dbReference type="FunFam" id="3.30.420.40:FF:000071">
    <property type="entry name" value="Molecular chaperone DnaK"/>
    <property type="match status" value="1"/>
</dbReference>
<dbReference type="FunFam" id="3.90.640.10:FF:000003">
    <property type="entry name" value="Molecular chaperone DnaK"/>
    <property type="match status" value="1"/>
</dbReference>
<dbReference type="Gene3D" id="1.20.1270.10">
    <property type="match status" value="1"/>
</dbReference>
<dbReference type="Gene3D" id="3.30.420.40">
    <property type="match status" value="2"/>
</dbReference>
<dbReference type="Gene3D" id="3.90.640.10">
    <property type="entry name" value="Actin, Chain A, domain 4"/>
    <property type="match status" value="1"/>
</dbReference>
<dbReference type="Gene3D" id="2.60.34.10">
    <property type="entry name" value="Substrate Binding Domain Of DNAk, Chain A, domain 1"/>
    <property type="match status" value="1"/>
</dbReference>
<dbReference type="HAMAP" id="MF_00332">
    <property type="entry name" value="DnaK"/>
    <property type="match status" value="1"/>
</dbReference>
<dbReference type="InterPro" id="IPR043129">
    <property type="entry name" value="ATPase_NBD"/>
</dbReference>
<dbReference type="InterPro" id="IPR012725">
    <property type="entry name" value="Chaperone_DnaK"/>
</dbReference>
<dbReference type="InterPro" id="IPR018181">
    <property type="entry name" value="Heat_shock_70_CS"/>
</dbReference>
<dbReference type="InterPro" id="IPR029048">
    <property type="entry name" value="HSP70_C_sf"/>
</dbReference>
<dbReference type="InterPro" id="IPR029047">
    <property type="entry name" value="HSP70_peptide-bd_sf"/>
</dbReference>
<dbReference type="InterPro" id="IPR013126">
    <property type="entry name" value="Hsp_70_fam"/>
</dbReference>
<dbReference type="NCBIfam" id="NF001413">
    <property type="entry name" value="PRK00290.1"/>
    <property type="match status" value="1"/>
</dbReference>
<dbReference type="NCBIfam" id="TIGR02350">
    <property type="entry name" value="prok_dnaK"/>
    <property type="match status" value="1"/>
</dbReference>
<dbReference type="PANTHER" id="PTHR19375">
    <property type="entry name" value="HEAT SHOCK PROTEIN 70KDA"/>
    <property type="match status" value="1"/>
</dbReference>
<dbReference type="Pfam" id="PF00012">
    <property type="entry name" value="HSP70"/>
    <property type="match status" value="1"/>
</dbReference>
<dbReference type="PRINTS" id="PR00301">
    <property type="entry name" value="HEATSHOCK70"/>
</dbReference>
<dbReference type="SUPFAM" id="SSF53067">
    <property type="entry name" value="Actin-like ATPase domain"/>
    <property type="match status" value="2"/>
</dbReference>
<dbReference type="SUPFAM" id="SSF100934">
    <property type="entry name" value="Heat shock protein 70kD (HSP70), C-terminal subdomain"/>
    <property type="match status" value="1"/>
</dbReference>
<dbReference type="SUPFAM" id="SSF100920">
    <property type="entry name" value="Heat shock protein 70kD (HSP70), peptide-binding domain"/>
    <property type="match status" value="1"/>
</dbReference>
<dbReference type="PROSITE" id="PS00297">
    <property type="entry name" value="HSP70_1"/>
    <property type="match status" value="1"/>
</dbReference>
<dbReference type="PROSITE" id="PS00329">
    <property type="entry name" value="HSP70_2"/>
    <property type="match status" value="1"/>
</dbReference>
<dbReference type="PROSITE" id="PS01036">
    <property type="entry name" value="HSP70_3"/>
    <property type="match status" value="1"/>
</dbReference>
<gene>
    <name evidence="2" type="primary">dnaK</name>
    <name type="ordered locus">LMOf2365_1492</name>
</gene>
<feature type="initiator methionine" description="Removed" evidence="1">
    <location>
        <position position="1"/>
    </location>
</feature>
<feature type="chain" id="PRO_0000078483" description="Chaperone protein DnaK">
    <location>
        <begin position="2"/>
        <end position="613"/>
    </location>
</feature>
<feature type="region of interest" description="Disordered" evidence="3">
    <location>
        <begin position="578"/>
        <end position="613"/>
    </location>
</feature>
<feature type="compositionally biased region" description="Low complexity" evidence="3">
    <location>
        <begin position="578"/>
        <end position="591"/>
    </location>
</feature>
<feature type="compositionally biased region" description="Acidic residues" evidence="3">
    <location>
        <begin position="596"/>
        <end position="613"/>
    </location>
</feature>
<feature type="modified residue" description="Phosphothreonine; by autocatalysis" evidence="2">
    <location>
        <position position="173"/>
    </location>
</feature>
<accession>Q71ZJ7</accession>
<keyword id="KW-0067">ATP-binding</keyword>
<keyword id="KW-0143">Chaperone</keyword>
<keyword id="KW-0547">Nucleotide-binding</keyword>
<keyword id="KW-0597">Phosphoprotein</keyword>
<keyword id="KW-0346">Stress response</keyword>
<evidence type="ECO:0000250" key="1"/>
<evidence type="ECO:0000255" key="2">
    <source>
        <dbReference type="HAMAP-Rule" id="MF_00332"/>
    </source>
</evidence>
<evidence type="ECO:0000256" key="3">
    <source>
        <dbReference type="SAM" id="MobiDB-lite"/>
    </source>
</evidence>
<proteinExistence type="inferred from homology"/>
<reference key="1">
    <citation type="journal article" date="2004" name="Nucleic Acids Res.">
        <title>Whole genome comparisons of serotype 4b and 1/2a strains of the food-borne pathogen Listeria monocytogenes reveal new insights into the core genome components of this species.</title>
        <authorList>
            <person name="Nelson K.E."/>
            <person name="Fouts D.E."/>
            <person name="Mongodin E.F."/>
            <person name="Ravel J."/>
            <person name="DeBoy R.T."/>
            <person name="Kolonay J.F."/>
            <person name="Rasko D.A."/>
            <person name="Angiuoli S.V."/>
            <person name="Gill S.R."/>
            <person name="Paulsen I.T."/>
            <person name="Peterson J.D."/>
            <person name="White O."/>
            <person name="Nelson W.C."/>
            <person name="Nierman W.C."/>
            <person name="Beanan M.J."/>
            <person name="Brinkac L.M."/>
            <person name="Daugherty S.C."/>
            <person name="Dodson R.J."/>
            <person name="Durkin A.S."/>
            <person name="Madupu R."/>
            <person name="Haft D.H."/>
            <person name="Selengut J."/>
            <person name="Van Aken S.E."/>
            <person name="Khouri H.M."/>
            <person name="Fedorova N."/>
            <person name="Forberger H.A."/>
            <person name="Tran B."/>
            <person name="Kathariou S."/>
            <person name="Wonderling L.D."/>
            <person name="Uhlich G.A."/>
            <person name="Bayles D.O."/>
            <person name="Luchansky J.B."/>
            <person name="Fraser C.M."/>
        </authorList>
    </citation>
    <scope>NUCLEOTIDE SEQUENCE [LARGE SCALE GENOMIC DNA]</scope>
    <source>
        <strain>F2365</strain>
    </source>
</reference>
<organism>
    <name type="scientific">Listeria monocytogenes serotype 4b (strain F2365)</name>
    <dbReference type="NCBI Taxonomy" id="265669"/>
    <lineage>
        <taxon>Bacteria</taxon>
        <taxon>Bacillati</taxon>
        <taxon>Bacillota</taxon>
        <taxon>Bacilli</taxon>
        <taxon>Bacillales</taxon>
        <taxon>Listeriaceae</taxon>
        <taxon>Listeria</taxon>
    </lineage>
</organism>
<name>DNAK_LISMF</name>
<comment type="function">
    <text evidence="2">Acts as a chaperone.</text>
</comment>
<comment type="induction">
    <text evidence="2">By stress conditions e.g. heat shock.</text>
</comment>
<comment type="similarity">
    <text evidence="2">Belongs to the heat shock protein 70 family.</text>
</comment>
<sequence>MSKIIGIDLGTTNSAVAVLEGGEAKIIPNPEGARTTPSVVGFKNGERQVGEVAKRAAITNPNTISSIKRHMGTNYKETIEGKDYSPQEISAIILQYLKSYAEDYLGETVDKAVITVPAYFNDAQRQATKDAGKIAGLEVERIINEPTAAALAYGMDKTETDQTILVFDLGGGTFDVSILELGDGVFEVHSTAGDNELGGDDFDKKIIDYLVAEFKKDNGIDLSQDKMALQRLKDAAEKAKKDLSGVTSTQISLPFITAGEAGPLHLEVTLTRAKFDELTHDLVERTIAPTRQALKDANLSASDIDQVILVGGSTRIPAVQETIKKELGKEPHKGVNPDEVVAMGAAIQGGVITGDVKDVVLLDVTPLSLGIETMGGVMTTLIERNTTIPTSKSQTFSTAADNQPAVDIHVLQGERPMAKDNKTLGRFQLADIPPAPRGIPQIEVSFDIDKNGIVTVRAKDLGTGKEQNIVIKSSSGLTDEEIEKMVQDAEANAEEDKKNKENAELRNNADQLVFTVDKTLKELEGKVEEEEVKKAEAARDELQEALKGEDFEAIKEKTESLNEIVQNLSVKLYEQAAAEQQAAGGAEGQEAPQNDDVVDAEFEEVNDDDKENK</sequence>